<name>TTCA_LEGPH</name>
<organism>
    <name type="scientific">Legionella pneumophila subsp. pneumophila (strain Philadelphia 1 / ATCC 33152 / DSM 7513)</name>
    <dbReference type="NCBI Taxonomy" id="272624"/>
    <lineage>
        <taxon>Bacteria</taxon>
        <taxon>Pseudomonadati</taxon>
        <taxon>Pseudomonadota</taxon>
        <taxon>Gammaproteobacteria</taxon>
        <taxon>Legionellales</taxon>
        <taxon>Legionellaceae</taxon>
        <taxon>Legionella</taxon>
    </lineage>
</organism>
<feature type="chain" id="PRO_0000348761" description="tRNA-cytidine(32) 2-sulfurtransferase">
    <location>
        <begin position="1"/>
        <end position="283"/>
    </location>
</feature>
<feature type="short sequence motif" description="PP-loop motif" evidence="1">
    <location>
        <begin position="37"/>
        <end position="42"/>
    </location>
</feature>
<feature type="binding site" evidence="1">
    <location>
        <position position="112"/>
    </location>
    <ligand>
        <name>[4Fe-4S] cluster</name>
        <dbReference type="ChEBI" id="CHEBI:49883"/>
    </ligand>
</feature>
<feature type="binding site" evidence="1">
    <location>
        <position position="115"/>
    </location>
    <ligand>
        <name>[4Fe-4S] cluster</name>
        <dbReference type="ChEBI" id="CHEBI:49883"/>
    </ligand>
</feature>
<feature type="binding site" evidence="1">
    <location>
        <position position="203"/>
    </location>
    <ligand>
        <name>[4Fe-4S] cluster</name>
        <dbReference type="ChEBI" id="CHEBI:49883"/>
    </ligand>
</feature>
<proteinExistence type="inferred from homology"/>
<gene>
    <name evidence="1" type="primary">ttcA</name>
    <name type="ordered locus">lpg0698</name>
</gene>
<dbReference type="EC" id="2.8.1.-" evidence="1"/>
<dbReference type="EMBL" id="AE017354">
    <property type="protein sequence ID" value="AAU26787.1"/>
    <property type="molecule type" value="Genomic_DNA"/>
</dbReference>
<dbReference type="RefSeq" id="WP_010946435.1">
    <property type="nucleotide sequence ID" value="NC_002942.5"/>
</dbReference>
<dbReference type="RefSeq" id="YP_094734.1">
    <property type="nucleotide sequence ID" value="NC_002942.5"/>
</dbReference>
<dbReference type="SMR" id="Q5ZXN3"/>
<dbReference type="STRING" id="272624.lpg0698"/>
<dbReference type="PaxDb" id="272624-lpg0698"/>
<dbReference type="DNASU" id="3079869"/>
<dbReference type="GeneID" id="57034691"/>
<dbReference type="KEGG" id="lpn:lpg0698"/>
<dbReference type="PATRIC" id="fig|272624.6.peg.720"/>
<dbReference type="eggNOG" id="COG0037">
    <property type="taxonomic scope" value="Bacteria"/>
</dbReference>
<dbReference type="HOGENOM" id="CLU_026481_0_0_6"/>
<dbReference type="OrthoDB" id="9801054at2"/>
<dbReference type="Proteomes" id="UP000000609">
    <property type="component" value="Chromosome"/>
</dbReference>
<dbReference type="GO" id="GO:0005737">
    <property type="term" value="C:cytoplasm"/>
    <property type="evidence" value="ECO:0007669"/>
    <property type="project" value="UniProtKB-SubCell"/>
</dbReference>
<dbReference type="GO" id="GO:0051539">
    <property type="term" value="F:4 iron, 4 sulfur cluster binding"/>
    <property type="evidence" value="ECO:0007669"/>
    <property type="project" value="UniProtKB-UniRule"/>
</dbReference>
<dbReference type="GO" id="GO:0005524">
    <property type="term" value="F:ATP binding"/>
    <property type="evidence" value="ECO:0007669"/>
    <property type="project" value="UniProtKB-UniRule"/>
</dbReference>
<dbReference type="GO" id="GO:0000287">
    <property type="term" value="F:magnesium ion binding"/>
    <property type="evidence" value="ECO:0007669"/>
    <property type="project" value="UniProtKB-UniRule"/>
</dbReference>
<dbReference type="GO" id="GO:0016783">
    <property type="term" value="F:sulfurtransferase activity"/>
    <property type="evidence" value="ECO:0007669"/>
    <property type="project" value="UniProtKB-UniRule"/>
</dbReference>
<dbReference type="GO" id="GO:0000049">
    <property type="term" value="F:tRNA binding"/>
    <property type="evidence" value="ECO:0007669"/>
    <property type="project" value="UniProtKB-KW"/>
</dbReference>
<dbReference type="GO" id="GO:0034227">
    <property type="term" value="P:tRNA thio-modification"/>
    <property type="evidence" value="ECO:0007669"/>
    <property type="project" value="UniProtKB-UniRule"/>
</dbReference>
<dbReference type="CDD" id="cd24138">
    <property type="entry name" value="TtcA-like"/>
    <property type="match status" value="1"/>
</dbReference>
<dbReference type="Gene3D" id="3.40.50.620">
    <property type="entry name" value="HUPs"/>
    <property type="match status" value="1"/>
</dbReference>
<dbReference type="HAMAP" id="MF_01850">
    <property type="entry name" value="TtcA"/>
    <property type="match status" value="1"/>
</dbReference>
<dbReference type="InterPro" id="IPR014729">
    <property type="entry name" value="Rossmann-like_a/b/a_fold"/>
</dbReference>
<dbReference type="InterPro" id="IPR011063">
    <property type="entry name" value="TilS/TtcA_N"/>
</dbReference>
<dbReference type="InterPro" id="IPR012089">
    <property type="entry name" value="tRNA_Cyd_32_2_STrfase"/>
</dbReference>
<dbReference type="InterPro" id="IPR035107">
    <property type="entry name" value="tRNA_thiolation_TtcA_Ctu1"/>
</dbReference>
<dbReference type="NCBIfam" id="NF007972">
    <property type="entry name" value="PRK10696.1"/>
    <property type="match status" value="1"/>
</dbReference>
<dbReference type="PANTHER" id="PTHR43686:SF1">
    <property type="entry name" value="AMINOTRAN_5 DOMAIN-CONTAINING PROTEIN"/>
    <property type="match status" value="1"/>
</dbReference>
<dbReference type="PANTHER" id="PTHR43686">
    <property type="entry name" value="SULFURTRANSFERASE-RELATED"/>
    <property type="match status" value="1"/>
</dbReference>
<dbReference type="Pfam" id="PF01171">
    <property type="entry name" value="ATP_bind_3"/>
    <property type="match status" value="1"/>
</dbReference>
<dbReference type="PIRSF" id="PIRSF004976">
    <property type="entry name" value="ATPase_YdaO"/>
    <property type="match status" value="1"/>
</dbReference>
<dbReference type="SUPFAM" id="SSF52402">
    <property type="entry name" value="Adenine nucleotide alpha hydrolases-like"/>
    <property type="match status" value="1"/>
</dbReference>
<evidence type="ECO:0000255" key="1">
    <source>
        <dbReference type="HAMAP-Rule" id="MF_01850"/>
    </source>
</evidence>
<keyword id="KW-0004">4Fe-4S</keyword>
<keyword id="KW-0067">ATP-binding</keyword>
<keyword id="KW-0963">Cytoplasm</keyword>
<keyword id="KW-0408">Iron</keyword>
<keyword id="KW-0411">Iron-sulfur</keyword>
<keyword id="KW-0460">Magnesium</keyword>
<keyword id="KW-0479">Metal-binding</keyword>
<keyword id="KW-0547">Nucleotide-binding</keyword>
<keyword id="KW-1185">Reference proteome</keyword>
<keyword id="KW-0694">RNA-binding</keyword>
<keyword id="KW-0808">Transferase</keyword>
<keyword id="KW-0819">tRNA processing</keyword>
<keyword id="KW-0820">tRNA-binding</keyword>
<accession>Q5ZXN3</accession>
<sequence>MSSNPSSVEKKLLHYTGKAIADFNMIQRGDRVMVCLSGGKDSFTLLTILNQLRIKSGNKFEIFAFTLDQAQPGWNDACLRQWLAEKSIPHEILTRDTYSIVKEKIPEGKTYCSLCSRLRRGIIYRYAEENGFNKIALGHHRDDLVRTLMMSILYNGDIRSMPPKLLSDNKKHIVIRPLCYVQEKDIITFASEQAFPIIPCNLCGSQENLMRKKVASLIDQLAIENPKVPSNMLHALQSLKPSQLMDQNFWNFKNLEDGLETTQSIQCEEVFNAQEFELEDEKI</sequence>
<protein>
    <recommendedName>
        <fullName evidence="1">tRNA-cytidine(32) 2-sulfurtransferase</fullName>
        <ecNumber evidence="1">2.8.1.-</ecNumber>
    </recommendedName>
    <alternativeName>
        <fullName evidence="1">Two-thiocytidine biosynthesis protein A</fullName>
    </alternativeName>
    <alternativeName>
        <fullName evidence="1">tRNA 2-thiocytidine biosynthesis protein TtcA</fullName>
    </alternativeName>
</protein>
<reference key="1">
    <citation type="journal article" date="2004" name="Science">
        <title>The genomic sequence of the accidental pathogen Legionella pneumophila.</title>
        <authorList>
            <person name="Chien M."/>
            <person name="Morozova I."/>
            <person name="Shi S."/>
            <person name="Sheng H."/>
            <person name="Chen J."/>
            <person name="Gomez S.M."/>
            <person name="Asamani G."/>
            <person name="Hill K."/>
            <person name="Nuara J."/>
            <person name="Feder M."/>
            <person name="Rineer J."/>
            <person name="Greenberg J.J."/>
            <person name="Steshenko V."/>
            <person name="Park S.H."/>
            <person name="Zhao B."/>
            <person name="Teplitskaya E."/>
            <person name="Edwards J.R."/>
            <person name="Pampou S."/>
            <person name="Georghiou A."/>
            <person name="Chou I.-C."/>
            <person name="Iannuccilli W."/>
            <person name="Ulz M.E."/>
            <person name="Kim D.H."/>
            <person name="Geringer-Sameth A."/>
            <person name="Goldsberry C."/>
            <person name="Morozov P."/>
            <person name="Fischer S.G."/>
            <person name="Segal G."/>
            <person name="Qu X."/>
            <person name="Rzhetsky A."/>
            <person name="Zhang P."/>
            <person name="Cayanis E."/>
            <person name="De Jong P.J."/>
            <person name="Ju J."/>
            <person name="Kalachikov S."/>
            <person name="Shuman H.A."/>
            <person name="Russo J.J."/>
        </authorList>
    </citation>
    <scope>NUCLEOTIDE SEQUENCE [LARGE SCALE GENOMIC DNA]</scope>
    <source>
        <strain>Philadelphia 1 / ATCC 33152 / DSM 7513</strain>
    </source>
</reference>
<comment type="function">
    <text evidence="1">Catalyzes the ATP-dependent 2-thiolation of cytidine in position 32 of tRNA, to form 2-thiocytidine (s(2)C32). The sulfur atoms are provided by the cysteine/cysteine desulfurase (IscS) system.</text>
</comment>
<comment type="catalytic activity">
    <reaction evidence="1">
        <text>cytidine(32) in tRNA + S-sulfanyl-L-cysteinyl-[cysteine desulfurase] + AH2 + ATP = 2-thiocytidine(32) in tRNA + L-cysteinyl-[cysteine desulfurase] + A + AMP + diphosphate + H(+)</text>
        <dbReference type="Rhea" id="RHEA:57048"/>
        <dbReference type="Rhea" id="RHEA-COMP:10288"/>
        <dbReference type="Rhea" id="RHEA-COMP:12157"/>
        <dbReference type="Rhea" id="RHEA-COMP:12158"/>
        <dbReference type="Rhea" id="RHEA-COMP:14821"/>
        <dbReference type="ChEBI" id="CHEBI:13193"/>
        <dbReference type="ChEBI" id="CHEBI:15378"/>
        <dbReference type="ChEBI" id="CHEBI:17499"/>
        <dbReference type="ChEBI" id="CHEBI:29950"/>
        <dbReference type="ChEBI" id="CHEBI:30616"/>
        <dbReference type="ChEBI" id="CHEBI:33019"/>
        <dbReference type="ChEBI" id="CHEBI:61963"/>
        <dbReference type="ChEBI" id="CHEBI:82748"/>
        <dbReference type="ChEBI" id="CHEBI:141453"/>
        <dbReference type="ChEBI" id="CHEBI:456215"/>
    </reaction>
    <physiologicalReaction direction="left-to-right" evidence="1">
        <dbReference type="Rhea" id="RHEA:57049"/>
    </physiologicalReaction>
</comment>
<comment type="cofactor">
    <cofactor evidence="1">
        <name>Mg(2+)</name>
        <dbReference type="ChEBI" id="CHEBI:18420"/>
    </cofactor>
</comment>
<comment type="cofactor">
    <cofactor evidence="1">
        <name>[4Fe-4S] cluster</name>
        <dbReference type="ChEBI" id="CHEBI:49883"/>
    </cofactor>
    <text evidence="1">Binds 1 [4Fe-4S] cluster per subunit. The cluster is chelated by three Cys residues, the fourth Fe has a free coordination site that may bind a sulfur atom transferred from the persulfide of IscS.</text>
</comment>
<comment type="pathway">
    <text evidence="1">tRNA modification.</text>
</comment>
<comment type="subunit">
    <text evidence="1">Homodimer.</text>
</comment>
<comment type="subcellular location">
    <subcellularLocation>
        <location evidence="1">Cytoplasm</location>
    </subcellularLocation>
</comment>
<comment type="miscellaneous">
    <text evidence="1">The thiolation reaction likely consists of two steps: a first activation step by ATP to form an adenylated intermediate of the target base of tRNA, and a second nucleophilic substitution step of the sulfur (S) atom supplied by the hydrosulfide attached to the Fe-S cluster.</text>
</comment>
<comment type="similarity">
    <text evidence="1">Belongs to the TtcA family.</text>
</comment>